<name>FL_ORYSJ</name>
<protein>
    <recommendedName>
        <fullName evidence="7">Probable transcription factor FL</fullName>
        <shortName evidence="7">RFL</shortName>
    </recommendedName>
    <alternativeName>
        <fullName evidence="6">Protein ABERRANT PANICLE ORGANIZATION 2</fullName>
    </alternativeName>
</protein>
<organism>
    <name type="scientific">Oryza sativa subsp. japonica</name>
    <name type="common">Rice</name>
    <dbReference type="NCBI Taxonomy" id="39947"/>
    <lineage>
        <taxon>Eukaryota</taxon>
        <taxon>Viridiplantae</taxon>
        <taxon>Streptophyta</taxon>
        <taxon>Embryophyta</taxon>
        <taxon>Tracheophyta</taxon>
        <taxon>Spermatophyta</taxon>
        <taxon>Magnoliopsida</taxon>
        <taxon>Liliopsida</taxon>
        <taxon>Poales</taxon>
        <taxon>Poaceae</taxon>
        <taxon>BOP clade</taxon>
        <taxon>Oryzoideae</taxon>
        <taxon>Oryzeae</taxon>
        <taxon>Oryzinae</taxon>
        <taxon>Oryza</taxon>
        <taxon>Oryza sativa</taxon>
    </lineage>
</organism>
<feature type="chain" id="PRO_0000129150" description="Probable transcription factor FL">
    <location>
        <begin position="1"/>
        <end position="389"/>
    </location>
</feature>
<feature type="DNA-binding region" evidence="1">
    <location>
        <begin position="221"/>
        <end position="225"/>
    </location>
</feature>
<feature type="DNA-binding region" evidence="1">
    <location>
        <begin position="290"/>
        <end position="297"/>
    </location>
</feature>
<feature type="DNA-binding region" evidence="1">
    <location>
        <begin position="361"/>
        <end position="364"/>
    </location>
</feature>
<feature type="region of interest" description="Disordered" evidence="3">
    <location>
        <begin position="1"/>
        <end position="41"/>
    </location>
</feature>
<feature type="region of interest" description="Disordered" evidence="3">
    <location>
        <begin position="140"/>
        <end position="226"/>
    </location>
</feature>
<feature type="short sequence motif" description="Nuclear localization signal" evidence="2">
    <location>
        <begin position="161"/>
        <end position="168"/>
    </location>
</feature>
<feature type="compositionally biased region" description="Pro residues" evidence="3">
    <location>
        <begin position="19"/>
        <end position="39"/>
    </location>
</feature>
<feature type="compositionally biased region" description="Basic residues" evidence="3">
    <location>
        <begin position="159"/>
        <end position="180"/>
    </location>
</feature>
<feature type="compositionally biased region" description="Acidic residues" evidence="3">
    <location>
        <begin position="190"/>
        <end position="201"/>
    </location>
</feature>
<feature type="site" description="Interaction with DNA" evidence="1">
    <location>
        <position position="268"/>
    </location>
</feature>
<feature type="site" description="Interaction with DNA" evidence="1">
    <location>
        <position position="275"/>
    </location>
</feature>
<feature type="site" description="Interaction with DNA" evidence="1">
    <location>
        <position position="279"/>
    </location>
</feature>
<feature type="site" description="Interaction with DNA" evidence="1">
    <location>
        <position position="326"/>
    </location>
</feature>
<feature type="sequence conflict" description="In Ref. 2; CAE03943 and 3; BAF15656." evidence="8" ref="2 3">
    <original>R</original>
    <variation>P</variation>
    <location>
        <position position="321"/>
    </location>
</feature>
<comment type="function">
    <text evidence="1 4">Probable transcription factor (By similarity). Together with APO1, involved in the temporal regulation of meristem size and identity during both vegetative and reproductive developments through interaction with APO1 (PubMed:21910771). Promotes flowering (PubMed:21910771).</text>
</comment>
<comment type="subunit">
    <text evidence="4">Interacts with APO1.</text>
</comment>
<comment type="subcellular location">
    <subcellularLocation>
        <location evidence="2">Nucleus</location>
    </subcellularLocation>
</comment>
<comment type="tissue specificity">
    <text evidence="5">In very young panicle but not in mature florets, mature leaves, roots or apical meristems.</text>
</comment>
<comment type="developmental stage">
    <text evidence="4">In the vegetative phase, expressed in shoot meristems and leaf primordia. In the reproductive phase, present in the meristems of primary and secondary branches at primordial and elongating stages, but later transiently down-regulated from the meristems, when the meristem identity change from inflorescence to spikelet. Subsequent expression recovery when spikelets are differentiated, with an accumulation in floral meristems and in primordia of all floral organs, including lodicules, stamens, carpels and ovules.</text>
</comment>
<comment type="disruption phenotype">
    <text evidence="4">Several abnormal phenotypes in the vegetative and reproductive phases including short plastochron, late flowering, small panicles, reduced meristems size, aberrant floral organ identities and loss of floral meristem determinacy (PubMed:21910771). Reduced panicles size is associated with reduced number of primary branches due to the precocious formation of spikelet meristems (PubMed:21910771).</text>
</comment>
<comment type="similarity">
    <text evidence="8">Belongs to the FLO/LFY family.</text>
</comment>
<gene>
    <name evidence="7" type="primary">FL</name>
    <name evidence="6" type="synonym">APO2</name>
    <name type="synonym">OSL</name>
    <name evidence="8" type="ordered locus">Os04g0598300</name>
    <name evidence="8" type="ordered locus">LOC_Os04g51000</name>
    <name evidence="9" type="ORF">OsJ_16017</name>
    <name type="ORF">OSJNba0093F12.17</name>
</gene>
<accession>Q0JAI1</accession>
<accession>A3AX14</accession>
<accession>O24175</accession>
<accession>Q7XNU1</accession>
<accession>Q9S9R2</accession>
<sequence length="389" mass="42530">MDPNDAFSAAHPFRWDLGPPAPAPVPPPPPPPPPPPPANVPRELEELVAGYGVRMSTVARISELGFTASTLLAMTERELDDMMAALAGLFRWDLLLGERFGLRAALRAERGRLMSLGGRHHGHQSGSTVDGASQEVLSDEHDMAGSGGMGDDDNGRRMVTGKKQAKKGSAARKGKKARRKKVDDLRLDMQEDEMDCCDEDGGGGSESTESSAGGGGGERQREHPFVVTEPGEVARAKKNGLDYLFHLYEQCRLFLLQVQSMAKLHGHKSPTKVTNQVFRYAKKVGASYINKPKMRHYVHCYALHCLDEEASDALRRAYKARGENVGAWRQACYAPLVDISARHGFDIDAVFAAHPRLAIWYVPTRLRQLCHQARSSHAAAAAALPPPLF</sequence>
<dbReference type="EMBL" id="AB005620">
    <property type="protein sequence ID" value="BAA21547.1"/>
    <property type="molecule type" value="mRNA"/>
</dbReference>
<dbReference type="EMBL" id="AL607004">
    <property type="protein sequence ID" value="CAE03943.3"/>
    <property type="molecule type" value="Genomic_DNA"/>
</dbReference>
<dbReference type="EMBL" id="AP008210">
    <property type="protein sequence ID" value="BAF15656.1"/>
    <property type="molecule type" value="Genomic_DNA"/>
</dbReference>
<dbReference type="EMBL" id="AP014960">
    <property type="protein sequence ID" value="BAS90812.1"/>
    <property type="molecule type" value="Genomic_DNA"/>
</dbReference>
<dbReference type="EMBL" id="CM000141">
    <property type="protein sequence ID" value="EAZ31853.1"/>
    <property type="molecule type" value="Genomic_DNA"/>
</dbReference>
<dbReference type="PIR" id="T03411">
    <property type="entry name" value="T03411"/>
</dbReference>
<dbReference type="RefSeq" id="XP_015635355.1">
    <property type="nucleotide sequence ID" value="XM_015779869.1"/>
</dbReference>
<dbReference type="SMR" id="Q0JAI1"/>
<dbReference type="FunCoup" id="Q0JAI1">
    <property type="interactions" value="2516"/>
</dbReference>
<dbReference type="STRING" id="39947.Q0JAI1"/>
<dbReference type="PaxDb" id="39947-Q0JAI1"/>
<dbReference type="EnsemblPlants" id="Os04t0598300-01">
    <property type="protein sequence ID" value="Os04t0598300-01"/>
    <property type="gene ID" value="Os04g0598300"/>
</dbReference>
<dbReference type="Gramene" id="Os04t0598300-01">
    <property type="protein sequence ID" value="Os04t0598300-01"/>
    <property type="gene ID" value="Os04g0598300"/>
</dbReference>
<dbReference type="KEGG" id="dosa:Os04g0598300"/>
<dbReference type="eggNOG" id="ENOG502QSDD">
    <property type="taxonomic scope" value="Eukaryota"/>
</dbReference>
<dbReference type="InParanoid" id="Q0JAI1"/>
<dbReference type="OMA" id="KHSGAGY"/>
<dbReference type="OrthoDB" id="1875842at2759"/>
<dbReference type="Proteomes" id="UP000000763">
    <property type="component" value="Chromosome 4"/>
</dbReference>
<dbReference type="Proteomes" id="UP000007752">
    <property type="component" value="Chromosome 4"/>
</dbReference>
<dbReference type="Proteomes" id="UP000059680">
    <property type="component" value="Chromosome 4"/>
</dbReference>
<dbReference type="GO" id="GO:0005634">
    <property type="term" value="C:nucleus"/>
    <property type="evidence" value="ECO:0007669"/>
    <property type="project" value="UniProtKB-SubCell"/>
</dbReference>
<dbReference type="GO" id="GO:0003677">
    <property type="term" value="F:DNA binding"/>
    <property type="evidence" value="ECO:0007669"/>
    <property type="project" value="UniProtKB-KW"/>
</dbReference>
<dbReference type="GO" id="GO:0030154">
    <property type="term" value="P:cell differentiation"/>
    <property type="evidence" value="ECO:0007669"/>
    <property type="project" value="UniProtKB-KW"/>
</dbReference>
<dbReference type="GO" id="GO:0009908">
    <property type="term" value="P:flower development"/>
    <property type="evidence" value="ECO:0007669"/>
    <property type="project" value="UniProtKB-KW"/>
</dbReference>
<dbReference type="GO" id="GO:0010074">
    <property type="term" value="P:maintenance of meristem identity"/>
    <property type="evidence" value="ECO:0000315"/>
    <property type="project" value="UniProtKB"/>
</dbReference>
<dbReference type="GO" id="GO:1905613">
    <property type="term" value="P:regulation of developmental vegetative growth"/>
    <property type="evidence" value="ECO:0000315"/>
    <property type="project" value="UniProtKB"/>
</dbReference>
<dbReference type="GO" id="GO:0006355">
    <property type="term" value="P:regulation of DNA-templated transcription"/>
    <property type="evidence" value="ECO:0007669"/>
    <property type="project" value="InterPro"/>
</dbReference>
<dbReference type="GO" id="GO:0009909">
    <property type="term" value="P:regulation of flower development"/>
    <property type="evidence" value="ECO:0000315"/>
    <property type="project" value="UniProtKB"/>
</dbReference>
<dbReference type="FunFam" id="1.10.4180.10:FF:000001">
    <property type="entry name" value="Transcription factor floricaula/leafy"/>
    <property type="match status" value="1"/>
</dbReference>
<dbReference type="Gene3D" id="1.10.4180.10">
    <property type="entry name" value="Protein LEAFY"/>
    <property type="match status" value="1"/>
</dbReference>
<dbReference type="InterPro" id="IPR035209">
    <property type="entry name" value="FLO/LFY_C"/>
</dbReference>
<dbReference type="InterPro" id="IPR002910">
    <property type="entry name" value="FLO_LFY"/>
</dbReference>
<dbReference type="InterPro" id="IPR038276">
    <property type="entry name" value="Floricaula/leafy_C_sf"/>
</dbReference>
<dbReference type="InterPro" id="IPR035079">
    <property type="entry name" value="LFY_SAM"/>
</dbReference>
<dbReference type="PANTHER" id="PTHR36079">
    <property type="entry name" value="PROTEIN LEAFY"/>
    <property type="match status" value="1"/>
</dbReference>
<dbReference type="PANTHER" id="PTHR36079:SF1">
    <property type="entry name" value="PROTEIN LEAFY"/>
    <property type="match status" value="1"/>
</dbReference>
<dbReference type="Pfam" id="PF17538">
    <property type="entry name" value="C_LFY_FLO"/>
    <property type="match status" value="1"/>
</dbReference>
<dbReference type="Pfam" id="PF01698">
    <property type="entry name" value="SAM_LFY"/>
    <property type="match status" value="1"/>
</dbReference>
<dbReference type="SUPFAM" id="SSF101447">
    <property type="entry name" value="Formin homology 2 domain (FH2 domain)"/>
    <property type="match status" value="1"/>
</dbReference>
<proteinExistence type="evidence at protein level"/>
<reference key="1">
    <citation type="journal article" date="1998" name="Proc. Natl. Acad. Sci. U.S.A.">
        <title>Down-regulation of RFL, the FLO/LFY homolog of rice, accompanied with panicle branch initiation.</title>
        <authorList>
            <person name="Kyozuka J."/>
            <person name="Konishi S."/>
            <person name="Nemoto K."/>
            <person name="Izawa T."/>
            <person name="Shimamoto K."/>
        </authorList>
    </citation>
    <scope>NUCLEOTIDE SEQUENCE [MRNA]</scope>
    <scope>TISSUE SPECIFICITY</scope>
    <source>
        <strain>cv. Toride</strain>
        <tissue>Panicle</tissue>
    </source>
</reference>
<reference key="2">
    <citation type="journal article" date="2002" name="Nature">
        <title>Sequence and analysis of rice chromosome 4.</title>
        <authorList>
            <person name="Feng Q."/>
            <person name="Zhang Y."/>
            <person name="Hao P."/>
            <person name="Wang S."/>
            <person name="Fu G."/>
            <person name="Huang Y."/>
            <person name="Li Y."/>
            <person name="Zhu J."/>
            <person name="Liu Y."/>
            <person name="Hu X."/>
            <person name="Jia P."/>
            <person name="Zhang Y."/>
            <person name="Zhao Q."/>
            <person name="Ying K."/>
            <person name="Yu S."/>
            <person name="Tang Y."/>
            <person name="Weng Q."/>
            <person name="Zhang L."/>
            <person name="Lu Y."/>
            <person name="Mu J."/>
            <person name="Lu Y."/>
            <person name="Zhang L.S."/>
            <person name="Yu Z."/>
            <person name="Fan D."/>
            <person name="Liu X."/>
            <person name="Lu T."/>
            <person name="Li C."/>
            <person name="Wu Y."/>
            <person name="Sun T."/>
            <person name="Lei H."/>
            <person name="Li T."/>
            <person name="Hu H."/>
            <person name="Guan J."/>
            <person name="Wu M."/>
            <person name="Zhang R."/>
            <person name="Zhou B."/>
            <person name="Chen Z."/>
            <person name="Chen L."/>
            <person name="Jin Z."/>
            <person name="Wang R."/>
            <person name="Yin H."/>
            <person name="Cai Z."/>
            <person name="Ren S."/>
            <person name="Lv G."/>
            <person name="Gu W."/>
            <person name="Zhu G."/>
            <person name="Tu Y."/>
            <person name="Jia J."/>
            <person name="Zhang Y."/>
            <person name="Chen J."/>
            <person name="Kang H."/>
            <person name="Chen X."/>
            <person name="Shao C."/>
            <person name="Sun Y."/>
            <person name="Hu Q."/>
            <person name="Zhang X."/>
            <person name="Zhang W."/>
            <person name="Wang L."/>
            <person name="Ding C."/>
            <person name="Sheng H."/>
            <person name="Gu J."/>
            <person name="Chen S."/>
            <person name="Ni L."/>
            <person name="Zhu F."/>
            <person name="Chen W."/>
            <person name="Lan L."/>
            <person name="Lai Y."/>
            <person name="Cheng Z."/>
            <person name="Gu M."/>
            <person name="Jiang J."/>
            <person name="Li J."/>
            <person name="Hong G."/>
            <person name="Xue Y."/>
            <person name="Han B."/>
        </authorList>
    </citation>
    <scope>NUCLEOTIDE SEQUENCE [LARGE SCALE GENOMIC DNA]</scope>
    <source>
        <strain>cv. Nipponbare</strain>
    </source>
</reference>
<reference key="3">
    <citation type="journal article" date="2005" name="Nature">
        <title>The map-based sequence of the rice genome.</title>
        <authorList>
            <consortium name="International rice genome sequencing project (IRGSP)"/>
        </authorList>
    </citation>
    <scope>NUCLEOTIDE SEQUENCE [LARGE SCALE GENOMIC DNA]</scope>
    <source>
        <strain>cv. Nipponbare</strain>
    </source>
</reference>
<reference key="4">
    <citation type="journal article" date="2008" name="Nucleic Acids Res.">
        <title>The rice annotation project database (RAP-DB): 2008 update.</title>
        <authorList>
            <consortium name="The rice annotation project (RAP)"/>
        </authorList>
    </citation>
    <scope>GENOME REANNOTATION</scope>
    <source>
        <strain>cv. Nipponbare</strain>
    </source>
</reference>
<reference key="5">
    <citation type="journal article" date="2013" name="Rice">
        <title>Improvement of the Oryza sativa Nipponbare reference genome using next generation sequence and optical map data.</title>
        <authorList>
            <person name="Kawahara Y."/>
            <person name="de la Bastide M."/>
            <person name="Hamilton J.P."/>
            <person name="Kanamori H."/>
            <person name="McCombie W.R."/>
            <person name="Ouyang S."/>
            <person name="Schwartz D.C."/>
            <person name="Tanaka T."/>
            <person name="Wu J."/>
            <person name="Zhou S."/>
            <person name="Childs K.L."/>
            <person name="Davidson R.M."/>
            <person name="Lin H."/>
            <person name="Quesada-Ocampo L."/>
            <person name="Vaillancourt B."/>
            <person name="Sakai H."/>
            <person name="Lee S.S."/>
            <person name="Kim J."/>
            <person name="Numa H."/>
            <person name="Itoh T."/>
            <person name="Buell C.R."/>
            <person name="Matsumoto T."/>
        </authorList>
    </citation>
    <scope>GENOME REANNOTATION</scope>
    <scope>SEQUENCE REVISION TO ARG-321</scope>
    <source>
        <strain>cv. Nipponbare</strain>
    </source>
</reference>
<reference key="6">
    <citation type="journal article" date="2005" name="PLoS Biol.">
        <title>The genomes of Oryza sativa: a history of duplications.</title>
        <authorList>
            <person name="Yu J."/>
            <person name="Wang J."/>
            <person name="Lin W."/>
            <person name="Li S."/>
            <person name="Li H."/>
            <person name="Zhou J."/>
            <person name="Ni P."/>
            <person name="Dong W."/>
            <person name="Hu S."/>
            <person name="Zeng C."/>
            <person name="Zhang J."/>
            <person name="Zhang Y."/>
            <person name="Li R."/>
            <person name="Xu Z."/>
            <person name="Li S."/>
            <person name="Li X."/>
            <person name="Zheng H."/>
            <person name="Cong L."/>
            <person name="Lin L."/>
            <person name="Yin J."/>
            <person name="Geng J."/>
            <person name="Li G."/>
            <person name="Shi J."/>
            <person name="Liu J."/>
            <person name="Lv H."/>
            <person name="Li J."/>
            <person name="Wang J."/>
            <person name="Deng Y."/>
            <person name="Ran L."/>
            <person name="Shi X."/>
            <person name="Wang X."/>
            <person name="Wu Q."/>
            <person name="Li C."/>
            <person name="Ren X."/>
            <person name="Wang J."/>
            <person name="Wang X."/>
            <person name="Li D."/>
            <person name="Liu D."/>
            <person name="Zhang X."/>
            <person name="Ji Z."/>
            <person name="Zhao W."/>
            <person name="Sun Y."/>
            <person name="Zhang Z."/>
            <person name="Bao J."/>
            <person name="Han Y."/>
            <person name="Dong L."/>
            <person name="Ji J."/>
            <person name="Chen P."/>
            <person name="Wu S."/>
            <person name="Liu J."/>
            <person name="Xiao Y."/>
            <person name="Bu D."/>
            <person name="Tan J."/>
            <person name="Yang L."/>
            <person name="Ye C."/>
            <person name="Zhang J."/>
            <person name="Xu J."/>
            <person name="Zhou Y."/>
            <person name="Yu Y."/>
            <person name="Zhang B."/>
            <person name="Zhuang S."/>
            <person name="Wei H."/>
            <person name="Liu B."/>
            <person name="Lei M."/>
            <person name="Yu H."/>
            <person name="Li Y."/>
            <person name="Xu H."/>
            <person name="Wei S."/>
            <person name="He X."/>
            <person name="Fang L."/>
            <person name="Zhang Z."/>
            <person name="Zhang Y."/>
            <person name="Huang X."/>
            <person name="Su Z."/>
            <person name="Tong W."/>
            <person name="Li J."/>
            <person name="Tong Z."/>
            <person name="Li S."/>
            <person name="Ye J."/>
            <person name="Wang L."/>
            <person name="Fang L."/>
            <person name="Lei T."/>
            <person name="Chen C.-S."/>
            <person name="Chen H.-C."/>
            <person name="Xu Z."/>
            <person name="Li H."/>
            <person name="Huang H."/>
            <person name="Zhang F."/>
            <person name="Xu H."/>
            <person name="Li N."/>
            <person name="Zhao C."/>
            <person name="Li S."/>
            <person name="Dong L."/>
            <person name="Huang Y."/>
            <person name="Li L."/>
            <person name="Xi Y."/>
            <person name="Qi Q."/>
            <person name="Li W."/>
            <person name="Zhang B."/>
            <person name="Hu W."/>
            <person name="Zhang Y."/>
            <person name="Tian X."/>
            <person name="Jiao Y."/>
            <person name="Liang X."/>
            <person name="Jin J."/>
            <person name="Gao L."/>
            <person name="Zheng W."/>
            <person name="Hao B."/>
            <person name="Liu S.-M."/>
            <person name="Wang W."/>
            <person name="Yuan L."/>
            <person name="Cao M."/>
            <person name="McDermott J."/>
            <person name="Samudrala R."/>
            <person name="Wang J."/>
            <person name="Wong G.K.-S."/>
            <person name="Yang H."/>
        </authorList>
    </citation>
    <scope>NUCLEOTIDE SEQUENCE [LARGE SCALE GENOMIC DNA]</scope>
    <source>
        <strain>cv. Nipponbare</strain>
    </source>
</reference>
<reference key="7">
    <citation type="journal article" date="2012" name="Plant J.">
        <title>ABERRANT PANICLE ORGANIZATION 2/RFL, the rice ortholog of Arabidopsis LEAFY, suppresses the transition from inflorescence meristem to floral meristem through interaction with APO1.</title>
        <authorList>
            <person name="Ikeda-Kawakatsu K."/>
            <person name="Maekawa M."/>
            <person name="Izawa T."/>
            <person name="Itoh J.-I."/>
            <person name="Nagato Y."/>
        </authorList>
    </citation>
    <scope>FUNCTION</scope>
    <scope>DISRUPTION PHENOTYPE</scope>
    <scope>DEVELOPMENTAL STAGE</scope>
    <scope>INTERACTION WITH APO1</scope>
</reference>
<evidence type="ECO:0000250" key="1">
    <source>
        <dbReference type="UniProtKB" id="Q00958"/>
    </source>
</evidence>
<evidence type="ECO:0000255" key="2">
    <source>
        <dbReference type="PROSITE-ProRule" id="PRU00768"/>
    </source>
</evidence>
<evidence type="ECO:0000256" key="3">
    <source>
        <dbReference type="SAM" id="MobiDB-lite"/>
    </source>
</evidence>
<evidence type="ECO:0000269" key="4">
    <source>
    </source>
</evidence>
<evidence type="ECO:0000269" key="5">
    <source>
    </source>
</evidence>
<evidence type="ECO:0000303" key="6">
    <source>
    </source>
</evidence>
<evidence type="ECO:0000303" key="7">
    <source>
    </source>
</evidence>
<evidence type="ECO:0000305" key="8"/>
<evidence type="ECO:0000312" key="9">
    <source>
        <dbReference type="EMBL" id="EAZ31853.1"/>
    </source>
</evidence>
<keyword id="KW-0010">Activator</keyword>
<keyword id="KW-0217">Developmental protein</keyword>
<keyword id="KW-0221">Differentiation</keyword>
<keyword id="KW-0238">DNA-binding</keyword>
<keyword id="KW-0287">Flowering</keyword>
<keyword id="KW-0539">Nucleus</keyword>
<keyword id="KW-1185">Reference proteome</keyword>
<keyword id="KW-0804">Transcription</keyword>
<keyword id="KW-0805">Transcription regulation</keyword>